<name>HXA5_LAGLA</name>
<gene>
    <name type="primary">HOXA5</name>
</gene>
<evidence type="ECO:0000250" key="1"/>
<evidence type="ECO:0000250" key="2">
    <source>
        <dbReference type="UniProtKB" id="P20719"/>
    </source>
</evidence>
<evidence type="ECO:0000255" key="3">
    <source>
        <dbReference type="PROSITE-ProRule" id="PRU00108"/>
    </source>
</evidence>
<evidence type="ECO:0000256" key="4">
    <source>
        <dbReference type="SAM" id="MobiDB-lite"/>
    </source>
</evidence>
<evidence type="ECO:0000305" key="5"/>
<proteinExistence type="inferred from homology"/>
<sequence>MSSYFVNSFCGRYPNGPDYQLHNYGDHSSVSEQFRDSASMHSGRYGYGYNGMDLSVGRSGSGHFGSGERARSYAAGASAAPAEPRYSQPATSTHSPPPDPLPCSAVAPSPGGDSHHGGKNSLGNSSGASANAGSTHISSREGVGTASGAEEDAPASSEQASAQSEPSPAPPAQPQIYPWMRKLHISHDNIGGPEGKRARTAYTRYQTLELEKEFHFNRYLTRRRRIEIAHALCLSERQIKIWFQNRRMKWKKDNKLKSMSMAAAGGAFRP</sequence>
<reference key="1">
    <citation type="submission" date="2006-08" db="EMBL/GenBank/DDBJ databases">
        <title>Positive selection in transcription factor genes on the human lineage.</title>
        <authorList>
            <person name="Nickel G.C."/>
            <person name="Tefft D.L."/>
            <person name="Trevarthen K."/>
            <person name="Funt J."/>
            <person name="Adams M.D."/>
        </authorList>
    </citation>
    <scope>NUCLEOTIDE SEQUENCE [GENOMIC DNA]</scope>
</reference>
<protein>
    <recommendedName>
        <fullName>Homeobox protein Hox-A5</fullName>
    </recommendedName>
</protein>
<keyword id="KW-0217">Developmental protein</keyword>
<keyword id="KW-0238">DNA-binding</keyword>
<keyword id="KW-0371">Homeobox</keyword>
<keyword id="KW-0539">Nucleus</keyword>
<keyword id="KW-0804">Transcription</keyword>
<keyword id="KW-0805">Transcription regulation</keyword>
<organism>
    <name type="scientific">Lagothrix lagotricha</name>
    <name type="common">Brown woolly monkey</name>
    <name type="synonym">Humboldt's woolly monkey</name>
    <dbReference type="NCBI Taxonomy" id="9519"/>
    <lineage>
        <taxon>Eukaryota</taxon>
        <taxon>Metazoa</taxon>
        <taxon>Chordata</taxon>
        <taxon>Craniata</taxon>
        <taxon>Vertebrata</taxon>
        <taxon>Euteleostomi</taxon>
        <taxon>Mammalia</taxon>
        <taxon>Eutheria</taxon>
        <taxon>Euarchontoglires</taxon>
        <taxon>Primates</taxon>
        <taxon>Haplorrhini</taxon>
        <taxon>Platyrrhini</taxon>
        <taxon>Atelidae</taxon>
        <taxon>Atelinae</taxon>
        <taxon>Lagothrix</taxon>
    </lineage>
</organism>
<dbReference type="EMBL" id="DQ976744">
    <property type="protein sequence ID" value="ABM68201.1"/>
    <property type="molecule type" value="Genomic_DNA"/>
</dbReference>
<dbReference type="SMR" id="A2D5K9"/>
<dbReference type="GO" id="GO:0005634">
    <property type="term" value="C:nucleus"/>
    <property type="evidence" value="ECO:0007669"/>
    <property type="project" value="UniProtKB-SubCell"/>
</dbReference>
<dbReference type="GO" id="GO:0000981">
    <property type="term" value="F:DNA-binding transcription factor activity, RNA polymerase II-specific"/>
    <property type="evidence" value="ECO:0007669"/>
    <property type="project" value="InterPro"/>
</dbReference>
<dbReference type="GO" id="GO:0000978">
    <property type="term" value="F:RNA polymerase II cis-regulatory region sequence-specific DNA binding"/>
    <property type="evidence" value="ECO:0007669"/>
    <property type="project" value="TreeGrafter"/>
</dbReference>
<dbReference type="GO" id="GO:0009952">
    <property type="term" value="P:anterior/posterior pattern specification"/>
    <property type="evidence" value="ECO:0007669"/>
    <property type="project" value="TreeGrafter"/>
</dbReference>
<dbReference type="CDD" id="cd00086">
    <property type="entry name" value="homeodomain"/>
    <property type="match status" value="1"/>
</dbReference>
<dbReference type="FunFam" id="1.10.10.60:FF:000055">
    <property type="entry name" value="Homeobox protein Hox-A5"/>
    <property type="match status" value="1"/>
</dbReference>
<dbReference type="Gene3D" id="1.10.10.60">
    <property type="entry name" value="Homeodomain-like"/>
    <property type="match status" value="1"/>
</dbReference>
<dbReference type="InterPro" id="IPR050296">
    <property type="entry name" value="Antp_homeobox"/>
</dbReference>
<dbReference type="InterPro" id="IPR001356">
    <property type="entry name" value="HD"/>
</dbReference>
<dbReference type="InterPro" id="IPR020479">
    <property type="entry name" value="HD_metazoa"/>
</dbReference>
<dbReference type="InterPro" id="IPR017995">
    <property type="entry name" value="Homeobox_antennapedia"/>
</dbReference>
<dbReference type="InterPro" id="IPR001827">
    <property type="entry name" value="Homeobox_Antennapedia_CS"/>
</dbReference>
<dbReference type="InterPro" id="IPR017970">
    <property type="entry name" value="Homeobox_CS"/>
</dbReference>
<dbReference type="InterPro" id="IPR009057">
    <property type="entry name" value="Homeodomain-like_sf"/>
</dbReference>
<dbReference type="PANTHER" id="PTHR45659">
    <property type="entry name" value="HOMEOBOX PROTEIN HOX"/>
    <property type="match status" value="1"/>
</dbReference>
<dbReference type="PANTHER" id="PTHR45659:SF10">
    <property type="entry name" value="HOMEOBOX PROTEIN HOX-A5"/>
    <property type="match status" value="1"/>
</dbReference>
<dbReference type="Pfam" id="PF00046">
    <property type="entry name" value="Homeodomain"/>
    <property type="match status" value="1"/>
</dbReference>
<dbReference type="PRINTS" id="PR00025">
    <property type="entry name" value="ANTENNAPEDIA"/>
</dbReference>
<dbReference type="PRINTS" id="PR00024">
    <property type="entry name" value="HOMEOBOX"/>
</dbReference>
<dbReference type="SMART" id="SM00389">
    <property type="entry name" value="HOX"/>
    <property type="match status" value="1"/>
</dbReference>
<dbReference type="SUPFAM" id="SSF46689">
    <property type="entry name" value="Homeodomain-like"/>
    <property type="match status" value="1"/>
</dbReference>
<dbReference type="PROSITE" id="PS00032">
    <property type="entry name" value="ANTENNAPEDIA"/>
    <property type="match status" value="1"/>
</dbReference>
<dbReference type="PROSITE" id="PS00027">
    <property type="entry name" value="HOMEOBOX_1"/>
    <property type="match status" value="1"/>
</dbReference>
<dbReference type="PROSITE" id="PS50071">
    <property type="entry name" value="HOMEOBOX_2"/>
    <property type="match status" value="1"/>
</dbReference>
<feature type="chain" id="PRO_0000285418" description="Homeobox protein Hox-A5">
    <location>
        <begin position="1"/>
        <end position="270"/>
    </location>
</feature>
<feature type="DNA-binding region" description="Homeobox" evidence="3">
    <location>
        <begin position="195"/>
        <end position="254"/>
    </location>
</feature>
<feature type="region of interest" description="Disordered" evidence="4">
    <location>
        <begin position="75"/>
        <end position="175"/>
    </location>
</feature>
<feature type="short sequence motif" description="Antp-type hexapeptide">
    <location>
        <begin position="176"/>
        <end position="181"/>
    </location>
</feature>
<feature type="compositionally biased region" description="Low complexity" evidence="4">
    <location>
        <begin position="75"/>
        <end position="86"/>
    </location>
</feature>
<feature type="compositionally biased region" description="Low complexity" evidence="4">
    <location>
        <begin position="119"/>
        <end position="134"/>
    </location>
</feature>
<feature type="compositionally biased region" description="Low complexity" evidence="4">
    <location>
        <begin position="154"/>
        <end position="166"/>
    </location>
</feature>
<comment type="function">
    <text evidence="1">Sequence-specific transcription factor which is part of a developmental regulatory system that provides cells with specific positional identities on the anterior-posterior axis. Also binds to its own promoter. Binds specifically to the motif 5'-CYYNATTA[TG]Y-3' (By similarity).</text>
</comment>
<comment type="subunit">
    <text evidence="2">Forms a DNA-binding heterodimer with transcription factor PBX1.</text>
</comment>
<comment type="subcellular location">
    <subcellularLocation>
        <location evidence="3">Nucleus</location>
    </subcellularLocation>
</comment>
<comment type="similarity">
    <text evidence="5">Belongs to the Antp homeobox family.</text>
</comment>
<accession>A2D5K9</accession>